<reference key="1">
    <citation type="journal article" date="1996" name="Eur. J. Biochem.">
        <title>Structure of the human gene encoding the phosphorylase kinase beta subunit (PHKB).</title>
        <authorList>
            <person name="Wuellrich-Schmoll A."/>
            <person name="Kilimann M.W."/>
        </authorList>
    </citation>
    <scope>NUCLEOTIDE SEQUENCE [GENOMIC DNA / MRNA]</scope>
    <scope>ALTERNATIVE SPLICING</scope>
</reference>
<reference key="2">
    <citation type="journal article" date="2004" name="Genome Res.">
        <title>The status, quality, and expansion of the NIH full-length cDNA project: the Mammalian Gene Collection (MGC).</title>
        <authorList>
            <consortium name="The MGC Project Team"/>
        </authorList>
    </citation>
    <scope>NUCLEOTIDE SEQUENCE [LARGE SCALE MRNA] (ISOFORM 4)</scope>
    <source>
        <tissue>Uterus</tissue>
    </source>
</reference>
<reference key="3">
    <citation type="journal article" date="2006" name="Nat. Biotechnol.">
        <title>A probability-based approach for high-throughput protein phosphorylation analysis and site localization.</title>
        <authorList>
            <person name="Beausoleil S.A."/>
            <person name="Villen J."/>
            <person name="Gerber S.A."/>
            <person name="Rush J."/>
            <person name="Gygi S.P."/>
        </authorList>
    </citation>
    <scope>IDENTIFICATION BY MASS SPECTROMETRY [LARGE SCALE ANALYSIS]</scope>
    <source>
        <tissue>Cervix carcinoma</tissue>
    </source>
</reference>
<reference key="4">
    <citation type="journal article" date="2008" name="Mol. Cell">
        <title>Kinase-selective enrichment enables quantitative phosphoproteomics of the kinome across the cell cycle.</title>
        <authorList>
            <person name="Daub H."/>
            <person name="Olsen J.V."/>
            <person name="Bairlein M."/>
            <person name="Gnad F."/>
            <person name="Oppermann F.S."/>
            <person name="Korner R."/>
            <person name="Greff Z."/>
            <person name="Keri G."/>
            <person name="Stemmann O."/>
            <person name="Mann M."/>
        </authorList>
    </citation>
    <scope>IDENTIFICATION BY MASS SPECTROMETRY [LARGE SCALE ANALYSIS]</scope>
    <source>
        <tissue>Cervix carcinoma</tissue>
    </source>
</reference>
<reference key="5">
    <citation type="journal article" date="2008" name="Proc. Natl. Acad. Sci. U.S.A.">
        <title>A quantitative atlas of mitotic phosphorylation.</title>
        <authorList>
            <person name="Dephoure N."/>
            <person name="Zhou C."/>
            <person name="Villen J."/>
            <person name="Beausoleil S.A."/>
            <person name="Bakalarski C.E."/>
            <person name="Elledge S.J."/>
            <person name="Gygi S.P."/>
        </authorList>
    </citation>
    <scope>PHOSPHORYLATION [LARGE SCALE ANALYSIS] AT SER-27</scope>
    <scope>IDENTIFICATION BY MASS SPECTROMETRY [LARGE SCALE ANALYSIS]</scope>
    <source>
        <tissue>Cervix carcinoma</tissue>
    </source>
</reference>
<reference key="6">
    <citation type="journal article" date="2009" name="Mol. Cell. Proteomics">
        <title>Large-scale proteomics analysis of the human kinome.</title>
        <authorList>
            <person name="Oppermann F.S."/>
            <person name="Gnad F."/>
            <person name="Olsen J.V."/>
            <person name="Hornberger R."/>
            <person name="Greff Z."/>
            <person name="Keri G."/>
            <person name="Mann M."/>
            <person name="Daub H."/>
        </authorList>
    </citation>
    <scope>IDENTIFICATION BY MASS SPECTROMETRY [LARGE SCALE ANALYSIS]</scope>
</reference>
<reference key="7">
    <citation type="journal article" date="2010" name="Sci. Signal.">
        <title>Quantitative phosphoproteomics reveals widespread full phosphorylation site occupancy during mitosis.</title>
        <authorList>
            <person name="Olsen J.V."/>
            <person name="Vermeulen M."/>
            <person name="Santamaria A."/>
            <person name="Kumar C."/>
            <person name="Miller M.L."/>
            <person name="Jensen L.J."/>
            <person name="Gnad F."/>
            <person name="Cox J."/>
            <person name="Jensen T.S."/>
            <person name="Nigg E.A."/>
            <person name="Brunak S."/>
            <person name="Mann M."/>
        </authorList>
    </citation>
    <scope>ACETYLATION [LARGE SCALE ANALYSIS] AT ALA-2 (ISOFORMS 2 AND 4)</scope>
    <scope>PHOSPHORYLATION [LARGE SCALE ANALYSIS] AT SER-4 (ISOFORMS 2 AND 4)</scope>
    <scope>CLEAVAGE OF INITIATOR METHIONINE [LARGE SCALE ANALYSIS] (ISOFORM 2)</scope>
    <scope>CLEAVAGE OF INITIATOR METHIONINE [LARGE SCALE ANALYSIS] (ISOFORM 4)</scope>
    <scope>IDENTIFICATION BY MASS SPECTROMETRY [LARGE SCALE ANALYSIS]</scope>
    <source>
        <tissue>Cervix carcinoma</tissue>
    </source>
</reference>
<reference key="8">
    <citation type="journal article" date="2011" name="BMC Syst. Biol.">
        <title>Initial characterization of the human central proteome.</title>
        <authorList>
            <person name="Burkard T.R."/>
            <person name="Planyavsky M."/>
            <person name="Kaupe I."/>
            <person name="Breitwieser F.P."/>
            <person name="Buerckstuemmer T."/>
            <person name="Bennett K.L."/>
            <person name="Superti-Furga G."/>
            <person name="Colinge J."/>
        </authorList>
    </citation>
    <scope>IDENTIFICATION BY MASS SPECTROMETRY [LARGE SCALE ANALYSIS]</scope>
</reference>
<reference key="9">
    <citation type="journal article" date="2013" name="J. Proteome Res.">
        <title>Toward a comprehensive characterization of a human cancer cell phosphoproteome.</title>
        <authorList>
            <person name="Zhou H."/>
            <person name="Di Palma S."/>
            <person name="Preisinger C."/>
            <person name="Peng M."/>
            <person name="Polat A.N."/>
            <person name="Heck A.J."/>
            <person name="Mohammed S."/>
        </authorList>
    </citation>
    <scope>PHOSPHORYLATION [LARGE SCALE ANALYSIS] AT SER-27</scope>
    <scope>IDENTIFICATION BY MASS SPECTROMETRY [LARGE SCALE ANALYSIS]</scope>
    <source>
        <tissue>Cervix carcinoma</tissue>
        <tissue>Erythroleukemia</tissue>
    </source>
</reference>
<reference key="10">
    <citation type="journal article" date="2014" name="J. Proteomics">
        <title>An enzyme assisted RP-RPLC approach for in-depth analysis of human liver phosphoproteome.</title>
        <authorList>
            <person name="Bian Y."/>
            <person name="Song C."/>
            <person name="Cheng K."/>
            <person name="Dong M."/>
            <person name="Wang F."/>
            <person name="Huang J."/>
            <person name="Sun D."/>
            <person name="Wang L."/>
            <person name="Ye M."/>
            <person name="Zou H."/>
        </authorList>
    </citation>
    <scope>PHOSPHORYLATION [LARGE SCALE ANALYSIS] AT SER-27</scope>
    <scope>IDENTIFICATION BY MASS SPECTROMETRY [LARGE SCALE ANALYSIS]</scope>
    <source>
        <tissue>Liver</tissue>
    </source>
</reference>
<reference key="11">
    <citation type="journal article" date="1997" name="Am. J. Hum. Genet.">
        <title>Autosomal recessive phosphorylase kinase deficiency in liver, caused by mutations in the gene encoding the beta subunit (PHKB).</title>
        <authorList>
            <person name="van den Berg I.E.T."/>
            <person name="van Beurden E.A.C.M."/>
            <person name="de Klerk J.B.C."/>
            <person name="van Diggelen O.P."/>
            <person name="Malingre H.E.M."/>
            <person name="Boer M.M."/>
            <person name="Berger R."/>
        </authorList>
    </citation>
    <scope>VARIANT CYS-770</scope>
</reference>
<reference key="12">
    <citation type="journal article" date="1997" name="Hum. Genet.">
        <title>Phosphorylase-kinase-deficient liver glycogenosis with an unusual biochemical phenotype in blood cells associated with a missense mutation in the beta subunit gene (PHKB).</title>
        <authorList>
            <person name="Burwinkel B."/>
            <person name="Moses S.W."/>
            <person name="Kilimann M.W."/>
        </authorList>
    </citation>
    <scope>VARIANT GSD9B PRO-118</scope>
</reference>
<reference key="13">
    <citation type="journal article" date="2003" name="Eur. J. Hum. Genet.">
        <title>Muscle glycogenosis with low phosphorylase kinase activity: mutations in PHKA1, PHKG1 or six other candidate genes explain only a minority of cases.</title>
        <authorList>
            <person name="Burwinkel B."/>
            <person name="Hu B."/>
            <person name="Schroers A."/>
            <person name="Clemens P.R."/>
            <person name="Moses S.W."/>
            <person name="Shin Y.S."/>
            <person name="Pongratz D."/>
            <person name="Vorgerd M."/>
            <person name="Kilimann M.W."/>
        </authorList>
    </citation>
    <scope>VARIANTS LYS-657 AND CYS-770</scope>
</reference>
<reference key="14">
    <citation type="journal article" date="2006" name="Science">
        <title>The consensus coding sequences of human breast and colorectal cancers.</title>
        <authorList>
            <person name="Sjoeblom T."/>
            <person name="Jones S."/>
            <person name="Wood L.D."/>
            <person name="Parsons D.W."/>
            <person name="Lin J."/>
            <person name="Barber T.D."/>
            <person name="Mandelker D."/>
            <person name="Leary R.J."/>
            <person name="Ptak J."/>
            <person name="Silliman N."/>
            <person name="Szabo S."/>
            <person name="Buckhaults P."/>
            <person name="Farrell C."/>
            <person name="Meeh P."/>
            <person name="Markowitz S.D."/>
            <person name="Willis J."/>
            <person name="Dawson D."/>
            <person name="Willson J.K.V."/>
            <person name="Gazdar A.F."/>
            <person name="Hartigan J."/>
            <person name="Wu L."/>
            <person name="Liu C."/>
            <person name="Parmigiani G."/>
            <person name="Park B.H."/>
            <person name="Bachman K.E."/>
            <person name="Papadopoulos N."/>
            <person name="Vogelstein B."/>
            <person name="Kinzler K.W."/>
            <person name="Velculescu V.E."/>
        </authorList>
    </citation>
    <scope>VARIANTS [LARGE SCALE ANALYSIS] VAL-867 AND ARG-877</scope>
</reference>
<protein>
    <recommendedName>
        <fullName>Phosphorylase b kinase regulatory subunit beta</fullName>
        <shortName>Phosphorylase kinase subunit beta</shortName>
    </recommendedName>
</protein>
<comment type="function">
    <text>Phosphorylase b kinase catalyzes the phosphorylation of serine in certain substrates, including troponin I. The beta chain acts as a regulatory unit and modulates the activity of the holoenzyme in response to phosphorylation.</text>
</comment>
<comment type="activity regulation">
    <text evidence="1">By phosphorylation of various serine residues.</text>
</comment>
<comment type="pathway">
    <text>Glycan biosynthesis; glycogen metabolism.</text>
</comment>
<comment type="subunit">
    <text>Hexadecamer of 4 heterotetramers, each composed of alpha, beta, gamma, and delta subunits. Alpha (PHKA1 or PHKA2) and beta (PHKB) are regulatory subunits, gamma (PHKG1 or PHKG2) is the catalytic subunit, and delta is calmodulin.</text>
</comment>
<comment type="interaction">
    <interactant intactId="EBI-740559">
        <id>Q93100</id>
    </interactant>
    <interactant intactId="EBI-1058722">
        <id>Q13554</id>
        <label>CAMK2B</label>
    </interactant>
    <organismsDiffer>false</organismsDiffer>
    <experiments>3</experiments>
</comment>
<comment type="interaction">
    <interactant intactId="EBI-740559">
        <id>Q93100</id>
    </interactant>
    <interactant intactId="EBI-310606">
        <id>Q8WUJ3</id>
        <label>CEMIP</label>
    </interactant>
    <organismsDiffer>false</organismsDiffer>
    <experiments>2</experiments>
</comment>
<comment type="interaction">
    <interactant intactId="EBI-740559">
        <id>Q93100</id>
    </interactant>
    <interactant intactId="EBI-1042651">
        <id>Q96RG2</id>
        <label>PASK</label>
    </interactant>
    <organismsDiffer>false</organismsDiffer>
    <experiments>2</experiments>
</comment>
<comment type="interaction">
    <interactant intactId="EBI-11064505">
        <id>Q93100-4</id>
    </interactant>
    <interactant intactId="EBI-1642846">
        <id>P46019</id>
        <label>PHKA2</label>
    </interactant>
    <organismsDiffer>false</organismsDiffer>
    <experiments>3</experiments>
</comment>
<comment type="subcellular location">
    <subcellularLocation>
        <location evidence="10">Cell membrane</location>
        <topology evidence="10">Lipid-anchor</topology>
        <orientation evidence="10">Cytoplasmic side</orientation>
    </subcellularLocation>
</comment>
<comment type="alternative products">
    <event type="alternative splicing"/>
    <isoform>
        <id>Q93100-1</id>
        <name>1</name>
        <sequence type="displayed"/>
    </isoform>
    <isoform>
        <id>Q93100-2</id>
        <name>2</name>
        <sequence type="described" ref="VSP_012445"/>
    </isoform>
    <isoform>
        <id>Q93100-3</id>
        <name>3</name>
        <sequence type="described" ref="VSP_012446"/>
    </isoform>
    <isoform>
        <id>Q93100-4</id>
        <name>4</name>
        <sequence type="described" ref="VSP_012445 VSP_012446"/>
    </isoform>
</comment>
<comment type="PTM">
    <text>Ser-701 is probably phosphorylated by PKA.</text>
</comment>
<comment type="PTM">
    <text evidence="2">Although the final Cys may be farnesylated, the terminal tripeptide is probably not removed, and the C-terminus is not methylated.</text>
</comment>
<comment type="disease" evidence="8">
    <disease id="DI-00529">
        <name>Glycogen storage disease 9B</name>
        <acronym>GSD9B</acronym>
        <description>A metabolic disorder characterized by hepatomegaly, only slightly elevated transaminases and plasma lipids, clinical improvement with increasing age, and remarkably no clinical muscle involvement. Biochemical observations suggest that this mild phenotype is caused by an incomplete holoenzyme that lacks the beta subunit, but that may possess residual activity.</description>
        <dbReference type="MIM" id="261750"/>
    </disease>
    <text>The disease is caused by variants affecting the gene represented in this entry.</text>
</comment>
<comment type="similarity">
    <text evidence="10">Belongs to the phosphorylase b kinase regulatory chain family.</text>
</comment>
<feature type="initiator methionine" description="Removed" evidence="2">
    <location>
        <position position="1"/>
    </location>
</feature>
<feature type="chain" id="PRO_0000057736" description="Phosphorylase b kinase regulatory subunit beta">
    <location>
        <begin position="2"/>
        <end position="1093"/>
    </location>
</feature>
<feature type="region of interest" description="Calmodulin-binding" evidence="3">
    <location>
        <begin position="7"/>
        <end position="29"/>
    </location>
</feature>
<feature type="region of interest" description="Disordered" evidence="4">
    <location>
        <begin position="689"/>
        <end position="716"/>
    </location>
</feature>
<feature type="region of interest" description="Calmodulin-binding" evidence="3">
    <location>
        <begin position="768"/>
        <end position="795"/>
    </location>
</feature>
<feature type="region of interest" description="Calmodulin-binding" evidence="3">
    <location>
        <begin position="920"/>
        <end position="951"/>
    </location>
</feature>
<feature type="modified residue" description="N-acetylalanine" evidence="2">
    <location>
        <position position="2"/>
    </location>
</feature>
<feature type="modified residue" description="Phosphoserine; by autocatalysis" evidence="2">
    <location>
        <position position="12"/>
    </location>
</feature>
<feature type="modified residue" description="Phosphoserine" evidence="11 13 14">
    <location>
        <position position="27"/>
    </location>
</feature>
<feature type="modified residue" description="Phosphoserine" evidence="2">
    <location>
        <position position="701"/>
    </location>
</feature>
<feature type="lipid moiety-binding region" description="S-farnesyl cysteine" evidence="2">
    <location>
        <position position="1090"/>
    </location>
</feature>
<feature type="splice variant" id="VSP_012445" description="In isoform 2 and isoform 4." evidence="9">
    <original>MAGAAGLTAEVSWKVLERRARTK</original>
    <variation>MACSPDAVVSPSSAFL</variation>
    <location>
        <begin position="1"/>
        <end position="23"/>
    </location>
</feature>
<feature type="splice variant" id="VSP_012446" description="In isoform 3 and isoform 4." evidence="9">
    <original>LAVRYGAAFTQKFSSSIAPHITTFLVH</original>
    <variation>SVVRRAASLLSKVVDSLAPSITNVLVQ</variation>
    <location>
        <begin position="780"/>
        <end position="806"/>
    </location>
</feature>
<feature type="sequence variant" id="VAR_015536" description="In GSD9B; dbSNP:rs121918022." evidence="8">
    <original>A</original>
    <variation>P</variation>
    <location>
        <position position="118"/>
    </location>
</feature>
<feature type="sequence variant" id="VAR_020857" description="In dbSNP:rs34667348." evidence="5">
    <original>Q</original>
    <variation>K</variation>
    <location>
        <position position="657"/>
    </location>
</feature>
<feature type="sequence variant" id="VAR_006187" description="In dbSNP:rs16945474." evidence="5 7">
    <original>Y</original>
    <variation>C</variation>
    <location>
        <position position="770"/>
    </location>
</feature>
<feature type="sequence variant" id="VAR_034056" description="In dbSNP:rs9934849.">
    <original>E</original>
    <variation>V</variation>
    <location>
        <position position="820"/>
    </location>
</feature>
<feature type="sequence variant" id="VAR_036486" description="In a breast cancer sample; somatic mutation." evidence="6">
    <original>L</original>
    <variation>V</variation>
    <location>
        <position position="867"/>
    </location>
</feature>
<feature type="sequence variant" id="VAR_036487" description="In a breast cancer sample; somatic mutation; dbSNP:rs150902092." evidence="6">
    <original>G</original>
    <variation>R</variation>
    <location>
        <position position="877"/>
    </location>
</feature>
<feature type="helix" evidence="17">
    <location>
        <begin position="45"/>
        <end position="59"/>
    </location>
</feature>
<feature type="helix" evidence="17">
    <location>
        <begin position="61"/>
        <end position="63"/>
    </location>
</feature>
<feature type="turn" evidence="17">
    <location>
        <begin position="66"/>
        <end position="68"/>
    </location>
</feature>
<feature type="strand" evidence="17">
    <location>
        <begin position="75"/>
        <end position="77"/>
    </location>
</feature>
<feature type="strand" evidence="17">
    <location>
        <begin position="81"/>
        <end position="83"/>
    </location>
</feature>
<feature type="helix" evidence="17">
    <location>
        <begin position="84"/>
        <end position="101"/>
    </location>
</feature>
<feature type="helix" evidence="17">
    <location>
        <begin position="110"/>
        <end position="130"/>
    </location>
</feature>
<feature type="helix" evidence="17">
    <location>
        <begin position="133"/>
        <end position="141"/>
    </location>
</feature>
<feature type="turn" evidence="16">
    <location>
        <begin position="145"/>
        <end position="147"/>
    </location>
</feature>
<feature type="strand" evidence="17">
    <location>
        <begin position="151"/>
        <end position="154"/>
    </location>
</feature>
<feature type="turn" evidence="17">
    <location>
        <begin position="155"/>
        <end position="157"/>
    </location>
</feature>
<feature type="turn" evidence="17">
    <location>
        <begin position="164"/>
        <end position="166"/>
    </location>
</feature>
<feature type="helix" evidence="17">
    <location>
        <begin position="172"/>
        <end position="188"/>
    </location>
</feature>
<feature type="helix" evidence="17">
    <location>
        <begin position="196"/>
        <end position="210"/>
    </location>
</feature>
<feature type="helix" evidence="17">
    <location>
        <begin position="211"/>
        <end position="214"/>
    </location>
</feature>
<feature type="turn" evidence="17">
    <location>
        <begin position="219"/>
        <end position="222"/>
    </location>
</feature>
<feature type="strand" evidence="15">
    <location>
        <begin position="225"/>
        <end position="227"/>
    </location>
</feature>
<feature type="helix" evidence="17">
    <location>
        <begin position="236"/>
        <end position="249"/>
    </location>
</feature>
<feature type="turn" evidence="17">
    <location>
        <begin position="254"/>
        <end position="257"/>
    </location>
</feature>
<feature type="strand" evidence="17">
    <location>
        <begin position="263"/>
        <end position="265"/>
    </location>
</feature>
<feature type="helix" evidence="17">
    <location>
        <begin position="269"/>
        <end position="282"/>
    </location>
</feature>
<feature type="strand" evidence="17">
    <location>
        <begin position="285"/>
        <end position="289"/>
    </location>
</feature>
<feature type="helix" evidence="17">
    <location>
        <begin position="296"/>
        <end position="300"/>
    </location>
</feature>
<feature type="turn" evidence="17">
    <location>
        <begin position="302"/>
        <end position="304"/>
    </location>
</feature>
<feature type="helix" evidence="17">
    <location>
        <begin position="310"/>
        <end position="324"/>
    </location>
</feature>
<feature type="strand" evidence="17">
    <location>
        <begin position="330"/>
        <end position="333"/>
    </location>
</feature>
<feature type="strand" evidence="15">
    <location>
        <begin position="341"/>
        <end position="343"/>
    </location>
</feature>
<feature type="turn" evidence="17">
    <location>
        <begin position="352"/>
        <end position="355"/>
    </location>
</feature>
<feature type="helix" evidence="17">
    <location>
        <begin position="356"/>
        <end position="358"/>
    </location>
</feature>
<feature type="helix" evidence="17">
    <location>
        <begin position="367"/>
        <end position="379"/>
    </location>
</feature>
<feature type="helix" evidence="17">
    <location>
        <begin position="382"/>
        <end position="395"/>
    </location>
</feature>
<feature type="helix" evidence="17">
    <location>
        <begin position="414"/>
        <end position="416"/>
    </location>
</feature>
<feature type="helix" evidence="17">
    <location>
        <begin position="417"/>
        <end position="422"/>
    </location>
</feature>
<feature type="strand" evidence="17">
    <location>
        <begin position="430"/>
        <end position="432"/>
    </location>
</feature>
<feature type="strand" evidence="17">
    <location>
        <begin position="435"/>
        <end position="438"/>
    </location>
</feature>
<feature type="helix" evidence="17">
    <location>
        <begin position="442"/>
        <end position="455"/>
    </location>
</feature>
<feature type="turn" evidence="17">
    <location>
        <begin position="461"/>
        <end position="463"/>
    </location>
</feature>
<feature type="helix" evidence="16">
    <location>
        <begin position="473"/>
        <end position="475"/>
    </location>
</feature>
<feature type="turn" evidence="17">
    <location>
        <begin position="479"/>
        <end position="482"/>
    </location>
</feature>
<feature type="strand" evidence="16">
    <location>
        <begin position="487"/>
        <end position="489"/>
    </location>
</feature>
<feature type="strand" evidence="17">
    <location>
        <begin position="495"/>
        <end position="503"/>
    </location>
</feature>
<feature type="helix" evidence="17">
    <location>
        <begin position="504"/>
        <end position="511"/>
    </location>
</feature>
<feature type="turn" evidence="17">
    <location>
        <begin position="512"/>
        <end position="514"/>
    </location>
</feature>
<feature type="turn" evidence="17">
    <location>
        <begin position="520"/>
        <end position="523"/>
    </location>
</feature>
<feature type="strand" evidence="17">
    <location>
        <begin position="525"/>
        <end position="529"/>
    </location>
</feature>
<feature type="helix" evidence="17">
    <location>
        <begin position="531"/>
        <end position="538"/>
    </location>
</feature>
<feature type="turn" evidence="17">
    <location>
        <begin position="539"/>
        <end position="542"/>
    </location>
</feature>
<feature type="turn" evidence="17">
    <location>
        <begin position="545"/>
        <end position="548"/>
    </location>
</feature>
<feature type="helix" evidence="17">
    <location>
        <begin position="559"/>
        <end position="563"/>
    </location>
</feature>
<feature type="strand" evidence="17">
    <location>
        <begin position="564"/>
        <end position="568"/>
    </location>
</feature>
<feature type="strand" evidence="17">
    <location>
        <begin position="571"/>
        <end position="575"/>
    </location>
</feature>
<feature type="helix" evidence="17">
    <location>
        <begin position="578"/>
        <end position="580"/>
    </location>
</feature>
<feature type="strand" evidence="17">
    <location>
        <begin position="582"/>
        <end position="584"/>
    </location>
</feature>
<feature type="turn" evidence="15">
    <location>
        <begin position="586"/>
        <end position="589"/>
    </location>
</feature>
<feature type="helix" evidence="17">
    <location>
        <begin position="591"/>
        <end position="608"/>
    </location>
</feature>
<feature type="strand" evidence="17">
    <location>
        <begin position="611"/>
        <end position="613"/>
    </location>
</feature>
<feature type="strand" evidence="17">
    <location>
        <begin position="616"/>
        <end position="621"/>
    </location>
</feature>
<feature type="helix" evidence="17">
    <location>
        <begin position="623"/>
        <end position="626"/>
    </location>
</feature>
<feature type="helix" evidence="17">
    <location>
        <begin position="628"/>
        <end position="630"/>
    </location>
</feature>
<feature type="helix" evidence="17">
    <location>
        <begin position="631"/>
        <end position="643"/>
    </location>
</feature>
<feature type="strand" evidence="16">
    <location>
        <begin position="646"/>
        <end position="648"/>
    </location>
</feature>
<feature type="strand" evidence="17">
    <location>
        <begin position="649"/>
        <end position="653"/>
    </location>
</feature>
<feature type="helix" evidence="17">
    <location>
        <begin position="658"/>
        <end position="660"/>
    </location>
</feature>
<feature type="strand" evidence="17">
    <location>
        <begin position="661"/>
        <end position="663"/>
    </location>
</feature>
<feature type="strand" evidence="17">
    <location>
        <begin position="665"/>
        <end position="667"/>
    </location>
</feature>
<feature type="helix" evidence="17">
    <location>
        <begin position="670"/>
        <end position="673"/>
    </location>
</feature>
<feature type="strand" evidence="16">
    <location>
        <begin position="675"/>
        <end position="678"/>
    </location>
</feature>
<feature type="helix" evidence="17">
    <location>
        <begin position="716"/>
        <end position="720"/>
    </location>
</feature>
<feature type="helix" evidence="17">
    <location>
        <begin position="727"/>
        <end position="733"/>
    </location>
</feature>
<feature type="helix" evidence="17">
    <location>
        <begin position="737"/>
        <end position="750"/>
    </location>
</feature>
<feature type="strand" evidence="17">
    <location>
        <begin position="758"/>
        <end position="761"/>
    </location>
</feature>
<feature type="helix" evidence="17">
    <location>
        <begin position="762"/>
        <end position="776"/>
    </location>
</feature>
<feature type="helix" evidence="17">
    <location>
        <begin position="779"/>
        <end position="787"/>
    </location>
</feature>
<feature type="turn" evidence="17">
    <location>
        <begin position="788"/>
        <end position="790"/>
    </location>
</feature>
<feature type="helix" evidence="17">
    <location>
        <begin position="796"/>
        <end position="804"/>
    </location>
</feature>
<feature type="turn" evidence="17">
    <location>
        <begin position="805"/>
        <end position="807"/>
    </location>
</feature>
<feature type="strand" evidence="17">
    <location>
        <begin position="809"/>
        <end position="813"/>
    </location>
</feature>
<feature type="strand" evidence="17">
    <location>
        <begin position="820"/>
        <end position="822"/>
    </location>
</feature>
<feature type="helix" evidence="17">
    <location>
        <begin position="828"/>
        <end position="836"/>
    </location>
</feature>
<feature type="turn" evidence="16">
    <location>
        <begin position="837"/>
        <end position="839"/>
    </location>
</feature>
<feature type="helix" evidence="17">
    <location>
        <begin position="845"/>
        <end position="863"/>
    </location>
</feature>
<feature type="helix" evidence="17">
    <location>
        <begin position="865"/>
        <end position="868"/>
    </location>
</feature>
<feature type="strand" evidence="17">
    <location>
        <begin position="873"/>
        <end position="875"/>
    </location>
</feature>
<feature type="helix" evidence="17">
    <location>
        <begin position="876"/>
        <end position="891"/>
    </location>
</feature>
<feature type="turn" evidence="17">
    <location>
        <begin position="899"/>
        <end position="901"/>
    </location>
</feature>
<feature type="helix" evidence="17">
    <location>
        <begin position="904"/>
        <end position="913"/>
    </location>
</feature>
<feature type="strand" evidence="17">
    <location>
        <begin position="916"/>
        <end position="918"/>
    </location>
</feature>
<feature type="helix" evidence="17">
    <location>
        <begin position="924"/>
        <end position="933"/>
    </location>
</feature>
<feature type="helix" evidence="17">
    <location>
        <begin position="941"/>
        <end position="949"/>
    </location>
</feature>
<feature type="strand" evidence="17">
    <location>
        <begin position="956"/>
        <end position="958"/>
    </location>
</feature>
<feature type="strand" evidence="17">
    <location>
        <begin position="961"/>
        <end position="963"/>
    </location>
</feature>
<feature type="helix" evidence="17">
    <location>
        <begin position="968"/>
        <end position="971"/>
    </location>
</feature>
<feature type="helix" evidence="17">
    <location>
        <begin position="977"/>
        <end position="987"/>
    </location>
</feature>
<feature type="helix" evidence="17">
    <location>
        <begin position="993"/>
        <end position="1012"/>
    </location>
</feature>
<feature type="helix" evidence="17">
    <location>
        <begin position="1024"/>
        <end position="1042"/>
    </location>
</feature>
<feature type="helix" evidence="17">
    <location>
        <begin position="1052"/>
        <end position="1056"/>
    </location>
</feature>
<feature type="strand" evidence="17">
    <location>
        <begin position="1059"/>
        <end position="1061"/>
    </location>
</feature>
<feature type="helix" evidence="17">
    <location>
        <begin position="1065"/>
        <end position="1077"/>
    </location>
</feature>
<feature type="strand" evidence="17">
    <location>
        <begin position="1086"/>
        <end position="1088"/>
    </location>
</feature>
<feature type="initiator methionine" description="Removed" evidence="12">
    <location sequence="Q93100-2">
        <position position="1"/>
    </location>
</feature>
<feature type="modified residue" description="N-acetylalanine" evidence="12">
    <location sequence="Q93100-2">
        <position position="2"/>
    </location>
</feature>
<feature type="modified residue" description="Phosphoserine" evidence="12">
    <location sequence="Q93100-2">
        <position position="4"/>
    </location>
</feature>
<feature type="initiator methionine" description="Removed" evidence="12">
    <location sequence="Q93100-4">
        <position position="1"/>
    </location>
</feature>
<feature type="modified residue" description="N-acetylalanine" evidence="12">
    <location sequence="Q93100-4">
        <position position="2"/>
    </location>
</feature>
<feature type="modified residue" description="Phosphoserine" evidence="12">
    <location sequence="Q93100-4">
        <position position="4"/>
    </location>
</feature>
<organism>
    <name type="scientific">Homo sapiens</name>
    <name type="common">Human</name>
    <dbReference type="NCBI Taxonomy" id="9606"/>
    <lineage>
        <taxon>Eukaryota</taxon>
        <taxon>Metazoa</taxon>
        <taxon>Chordata</taxon>
        <taxon>Craniata</taxon>
        <taxon>Vertebrata</taxon>
        <taxon>Euteleostomi</taxon>
        <taxon>Mammalia</taxon>
        <taxon>Eutheria</taxon>
        <taxon>Euarchontoglires</taxon>
        <taxon>Primates</taxon>
        <taxon>Haplorrhini</taxon>
        <taxon>Catarrhini</taxon>
        <taxon>Hominidae</taxon>
        <taxon>Homo</taxon>
    </lineage>
</organism>
<sequence>MAGAAGLTAEVSWKVLERRARTKRSGSVYEPLKSINLPRPDNETLWDKLDHYYRIVKSTLLLYQSPTTGLFPTKTCGGDQKAKIQDSLYCAAGAWALALAYRRIDDDKGRTHELEHSAIKCMRGILYCYMRQADKVQQFKQDPRPTTCLHSVFNVHTGDELLSYEEYGHLQINAVSLYLLYLVEMISSGLQIIYNTDEVSFIQNLVFCVERVYRVPDFGVWERGSKYNNGSTELHSSSVGLAKAALEAINGFNLFGNQGCSWSVIFVDLDAHNRNRQTLCSLLPRESRSHNTDAALLPCISYPAFALDDEVLFSQTLDKVVRKLKGKYGFKRFLRDGYRTSLEDPNRCYYKPAEIKLFDGIECEFPIFFLYMMIDGVFRGNPKQVQEYQDLLTPVLHHTTEGYPVVPKYYYVPADFVEYEKNNPGSQKRFPSNCGRDGKLFLWGQALYIIAKLLADELISPKDIDPVQRYVPLKDQRNVSMRFSNQGPLENDLVVHVALIAESQRLQVFLNTYGIQTQTPQQVEPIQIWPQQELVKAYLQLGINEKLGLSGRPDRPIGCLGTSKIYRILGKTVVCYPIIFDLSDFYMSQDVFLLIDDIKNALQFIKQYWKMHGRPLFLVLIREDNIRGSRFNPILDMLAALKKGIIGGVKVHVDRLQTLISGAVVEQLDFLRISDTEELPEFKSFEELEPPKHSKVKRQSSTPSAPELGQQPDVNISEWKDKPTHEILQKLNDCSCLASQAILLGILLKREGPNFITKEGTVSDHIERVYRRAGSQKLWLAVRYGAAFTQKFSSSIAPHITTFLVHGKQVTLGAFGHEEEVISNPLSPRVIQNIIYYKCNTHDEREAVIQQELVIHIGWIISNNPELFSGMLKIRIGWIIHAMEYELQIRGGDKPALDLYQLSPSEVKQLLLDILQPQQNGRCWLNRRQIDGSLNRTPTGFYDRVWQILERTPNGIIVAGKHLPQQPTLSDMTMYEMNFSLLVEDTLGNIDQPQYRQIVVELLMVVSIVLERNPELEFQDKVDLDRLVKEAFNEFQKDQSRLKEIEKQDDMTSFYNTPPLGKRGTCSYLTKAVMNLLLEGEVKPNNDDPCLIS</sequence>
<dbReference type="EMBL" id="X84909">
    <property type="protein sequence ID" value="CAA59333.1"/>
    <property type="molecule type" value="Genomic_DNA"/>
</dbReference>
<dbReference type="EMBL" id="X84911">
    <property type="protein sequence ID" value="CAA59333.1"/>
    <property type="status" value="JOINED"/>
    <property type="molecule type" value="Genomic_DNA"/>
</dbReference>
<dbReference type="EMBL" id="X84912">
    <property type="protein sequence ID" value="CAA59333.1"/>
    <property type="status" value="JOINED"/>
    <property type="molecule type" value="Genomic_DNA"/>
</dbReference>
<dbReference type="EMBL" id="X84913">
    <property type="protein sequence ID" value="CAA59333.1"/>
    <property type="status" value="JOINED"/>
    <property type="molecule type" value="Genomic_DNA"/>
</dbReference>
<dbReference type="EMBL" id="X84914">
    <property type="protein sequence ID" value="CAA59333.1"/>
    <property type="status" value="JOINED"/>
    <property type="molecule type" value="Genomic_DNA"/>
</dbReference>
<dbReference type="EMBL" id="X84915">
    <property type="protein sequence ID" value="CAA59333.1"/>
    <property type="status" value="JOINED"/>
    <property type="molecule type" value="Genomic_DNA"/>
</dbReference>
<dbReference type="EMBL" id="X84916">
    <property type="protein sequence ID" value="CAA59333.1"/>
    <property type="status" value="JOINED"/>
    <property type="molecule type" value="Genomic_DNA"/>
</dbReference>
<dbReference type="EMBL" id="X84917">
    <property type="protein sequence ID" value="CAA59333.1"/>
    <property type="status" value="JOINED"/>
    <property type="molecule type" value="Genomic_DNA"/>
</dbReference>
<dbReference type="EMBL" id="X84918">
    <property type="protein sequence ID" value="CAA59333.1"/>
    <property type="status" value="JOINED"/>
    <property type="molecule type" value="Genomic_DNA"/>
</dbReference>
<dbReference type="EMBL" id="X84919">
    <property type="protein sequence ID" value="CAA59333.1"/>
    <property type="status" value="JOINED"/>
    <property type="molecule type" value="Genomic_DNA"/>
</dbReference>
<dbReference type="EMBL" id="X84920">
    <property type="protein sequence ID" value="CAA59333.1"/>
    <property type="status" value="JOINED"/>
    <property type="molecule type" value="Genomic_DNA"/>
</dbReference>
<dbReference type="EMBL" id="X84921">
    <property type="protein sequence ID" value="CAA59333.1"/>
    <property type="status" value="JOINED"/>
    <property type="molecule type" value="Genomic_DNA"/>
</dbReference>
<dbReference type="EMBL" id="X84922">
    <property type="protein sequence ID" value="CAA59333.1"/>
    <property type="status" value="JOINED"/>
    <property type="molecule type" value="Genomic_DNA"/>
</dbReference>
<dbReference type="EMBL" id="X84923">
    <property type="protein sequence ID" value="CAA59333.1"/>
    <property type="status" value="JOINED"/>
    <property type="molecule type" value="Genomic_DNA"/>
</dbReference>
<dbReference type="EMBL" id="X84924">
    <property type="protein sequence ID" value="CAA59333.1"/>
    <property type="status" value="JOINED"/>
    <property type="molecule type" value="Genomic_DNA"/>
</dbReference>
<dbReference type="EMBL" id="X84925">
    <property type="protein sequence ID" value="CAA59333.1"/>
    <property type="status" value="JOINED"/>
    <property type="molecule type" value="Genomic_DNA"/>
</dbReference>
<dbReference type="EMBL" id="X84926">
    <property type="protein sequence ID" value="CAA59333.1"/>
    <property type="status" value="JOINED"/>
    <property type="molecule type" value="Genomic_DNA"/>
</dbReference>
<dbReference type="EMBL" id="X84927">
    <property type="protein sequence ID" value="CAA59333.1"/>
    <property type="status" value="JOINED"/>
    <property type="molecule type" value="Genomic_DNA"/>
</dbReference>
<dbReference type="EMBL" id="X84928">
    <property type="protein sequence ID" value="CAA59333.1"/>
    <property type="status" value="JOINED"/>
    <property type="molecule type" value="Genomic_DNA"/>
</dbReference>
<dbReference type="EMBL" id="X84929">
    <property type="protein sequence ID" value="CAA59333.1"/>
    <property type="status" value="JOINED"/>
    <property type="molecule type" value="Genomic_DNA"/>
</dbReference>
<dbReference type="EMBL" id="X84930">
    <property type="protein sequence ID" value="CAA59333.1"/>
    <property type="status" value="JOINED"/>
    <property type="molecule type" value="Genomic_DNA"/>
</dbReference>
<dbReference type="EMBL" id="X84931">
    <property type="protein sequence ID" value="CAA59333.1"/>
    <property type="status" value="JOINED"/>
    <property type="molecule type" value="Genomic_DNA"/>
</dbReference>
<dbReference type="EMBL" id="X84933">
    <property type="protein sequence ID" value="CAA59333.1"/>
    <property type="status" value="JOINED"/>
    <property type="molecule type" value="Genomic_DNA"/>
</dbReference>
<dbReference type="EMBL" id="X84934">
    <property type="protein sequence ID" value="CAA59333.1"/>
    <property type="status" value="JOINED"/>
    <property type="molecule type" value="Genomic_DNA"/>
</dbReference>
<dbReference type="EMBL" id="X84935">
    <property type="protein sequence ID" value="CAA59333.1"/>
    <property type="status" value="JOINED"/>
    <property type="molecule type" value="Genomic_DNA"/>
</dbReference>
<dbReference type="EMBL" id="X84936">
    <property type="protein sequence ID" value="CAA59333.1"/>
    <property type="status" value="JOINED"/>
    <property type="molecule type" value="Genomic_DNA"/>
</dbReference>
<dbReference type="EMBL" id="X84937">
    <property type="protein sequence ID" value="CAA59333.1"/>
    <property type="status" value="JOINED"/>
    <property type="molecule type" value="Genomic_DNA"/>
</dbReference>
<dbReference type="EMBL" id="X84938">
    <property type="protein sequence ID" value="CAA59333.1"/>
    <property type="status" value="JOINED"/>
    <property type="molecule type" value="Genomic_DNA"/>
</dbReference>
<dbReference type="EMBL" id="X84908">
    <property type="protein sequence ID" value="CAA59332.1"/>
    <property type="molecule type" value="mRNA"/>
</dbReference>
<dbReference type="EMBL" id="BC033657">
    <property type="protein sequence ID" value="AAH33657.1"/>
    <property type="molecule type" value="mRNA"/>
</dbReference>
<dbReference type="CCDS" id="CCDS10729.1">
    <molecule id="Q93100-1"/>
</dbReference>
<dbReference type="CCDS" id="CCDS42161.1">
    <molecule id="Q93100-4"/>
</dbReference>
<dbReference type="CCDS" id="CCDS92152.1">
    <molecule id="Q93100-3"/>
</dbReference>
<dbReference type="PIR" id="S74250">
    <property type="entry name" value="S74250"/>
</dbReference>
<dbReference type="PIR" id="S74251">
    <property type="entry name" value="S74251"/>
</dbReference>
<dbReference type="RefSeq" id="NP_000284.1">
    <molecule id="Q93100-1"/>
    <property type="nucleotide sequence ID" value="NM_000293.3"/>
</dbReference>
<dbReference type="RefSeq" id="NP_001027005.1">
    <molecule id="Q93100-4"/>
    <property type="nucleotide sequence ID" value="NM_001031835.3"/>
</dbReference>
<dbReference type="RefSeq" id="NP_001350766.1">
    <molecule id="Q93100-3"/>
    <property type="nucleotide sequence ID" value="NM_001363837.1"/>
</dbReference>
<dbReference type="RefSeq" id="XP_005256040.1">
    <property type="nucleotide sequence ID" value="XM_005255983.4"/>
</dbReference>
<dbReference type="RefSeq" id="XP_005256041.1">
    <property type="nucleotide sequence ID" value="XM_005255984.4"/>
</dbReference>
<dbReference type="PDB" id="8JFK">
    <property type="method" value="EM"/>
    <property type="resolution" value="2.90 A"/>
    <property type="chains" value="B/F/J/N=1-1093"/>
</dbReference>
<dbReference type="PDB" id="8JFL">
    <property type="method" value="EM"/>
    <property type="resolution" value="2.90 A"/>
    <property type="chains" value="B/F/J/N=1-1093"/>
</dbReference>
<dbReference type="PDB" id="8XYA">
    <property type="method" value="EM"/>
    <property type="resolution" value="2.70 A"/>
    <property type="chains" value="B=1-1093"/>
</dbReference>
<dbReference type="PDBsum" id="8JFK"/>
<dbReference type="PDBsum" id="8JFL"/>
<dbReference type="PDBsum" id="8XYA"/>
<dbReference type="EMDB" id="EMD-36212"/>
<dbReference type="EMDB" id="EMD-36213"/>
<dbReference type="SMR" id="Q93100"/>
<dbReference type="BioGRID" id="111275">
    <property type="interactions" value="62"/>
</dbReference>
<dbReference type="ComplexPortal" id="CPX-2640">
    <property type="entry name" value="Phosphorylase kinase, muscle variant"/>
</dbReference>
<dbReference type="ComplexPortal" id="CPX-9581">
    <property type="entry name" value="Phosphorylase kinase, liver variant"/>
</dbReference>
<dbReference type="CORUM" id="Q93100"/>
<dbReference type="FunCoup" id="Q93100">
    <property type="interactions" value="1344"/>
</dbReference>
<dbReference type="IntAct" id="Q93100">
    <property type="interactions" value="37"/>
</dbReference>
<dbReference type="MINT" id="Q93100"/>
<dbReference type="STRING" id="9606.ENSP00000313504"/>
<dbReference type="ChEMBL" id="CHEMBL2111324"/>
<dbReference type="GlyGen" id="Q93100">
    <property type="glycosylation" value="2 sites, 1 N-linked glycan (1 site)"/>
</dbReference>
<dbReference type="iPTMnet" id="Q93100"/>
<dbReference type="PhosphoSitePlus" id="Q93100"/>
<dbReference type="SwissPalm" id="Q93100"/>
<dbReference type="BioMuta" id="PHKB"/>
<dbReference type="DMDM" id="2499582"/>
<dbReference type="jPOST" id="Q93100"/>
<dbReference type="MassIVE" id="Q93100"/>
<dbReference type="PaxDb" id="9606-ENSP00000313504"/>
<dbReference type="PeptideAtlas" id="Q93100"/>
<dbReference type="ProteomicsDB" id="75726">
    <molecule id="Q93100-1"/>
</dbReference>
<dbReference type="ProteomicsDB" id="75727">
    <molecule id="Q93100-2"/>
</dbReference>
<dbReference type="ProteomicsDB" id="75728">
    <molecule id="Q93100-3"/>
</dbReference>
<dbReference type="ProteomicsDB" id="75729">
    <molecule id="Q93100-4"/>
</dbReference>
<dbReference type="Pumba" id="Q93100"/>
<dbReference type="Antibodypedia" id="28116">
    <property type="antibodies" value="180 antibodies from 29 providers"/>
</dbReference>
<dbReference type="DNASU" id="5257"/>
<dbReference type="Ensembl" id="ENST00000299167.12">
    <molecule id="Q93100-3"/>
    <property type="protein sequence ID" value="ENSP00000299167.8"/>
    <property type="gene ID" value="ENSG00000102893.18"/>
</dbReference>
<dbReference type="Ensembl" id="ENST00000323584.10">
    <molecule id="Q93100-1"/>
    <property type="protein sequence ID" value="ENSP00000313504.5"/>
    <property type="gene ID" value="ENSG00000102893.18"/>
</dbReference>
<dbReference type="Ensembl" id="ENST00000566044.5">
    <molecule id="Q93100-4"/>
    <property type="protein sequence ID" value="ENSP00000456729.1"/>
    <property type="gene ID" value="ENSG00000102893.18"/>
</dbReference>
<dbReference type="GeneID" id="5257"/>
<dbReference type="KEGG" id="hsa:5257"/>
<dbReference type="MANE-Select" id="ENST00000323584.10">
    <property type="protein sequence ID" value="ENSP00000313504.5"/>
    <property type="RefSeq nucleotide sequence ID" value="NM_000293.3"/>
    <property type="RefSeq protein sequence ID" value="NP_000284.1"/>
</dbReference>
<dbReference type="UCSC" id="uc002eeu.5">
    <molecule id="Q93100-1"/>
    <property type="organism name" value="human"/>
</dbReference>
<dbReference type="AGR" id="HGNC:8927"/>
<dbReference type="CTD" id="5257"/>
<dbReference type="DisGeNET" id="5257"/>
<dbReference type="GeneCards" id="PHKB"/>
<dbReference type="GeneReviews" id="PHKB"/>
<dbReference type="HGNC" id="HGNC:8927">
    <property type="gene designation" value="PHKB"/>
</dbReference>
<dbReference type="HPA" id="ENSG00000102893">
    <property type="expression patterns" value="Tissue enhanced (skeletal)"/>
</dbReference>
<dbReference type="MalaCards" id="PHKB"/>
<dbReference type="MIM" id="172490">
    <property type="type" value="gene"/>
</dbReference>
<dbReference type="MIM" id="261750">
    <property type="type" value="phenotype"/>
</dbReference>
<dbReference type="neXtProt" id="NX_Q93100"/>
<dbReference type="OpenTargets" id="ENSG00000102893"/>
<dbReference type="Orphanet" id="79240">
    <property type="disease" value="Glycogen storage disease due to liver and muscle phosphorylase kinase deficiency"/>
</dbReference>
<dbReference type="PharmGKB" id="PA33268"/>
<dbReference type="VEuPathDB" id="HostDB:ENSG00000102893"/>
<dbReference type="eggNOG" id="KOG3635">
    <property type="taxonomic scope" value="Eukaryota"/>
</dbReference>
<dbReference type="GeneTree" id="ENSGT00950000183118"/>
<dbReference type="HOGENOM" id="CLU_004177_0_1_1"/>
<dbReference type="InParanoid" id="Q93100"/>
<dbReference type="OMA" id="CWIKQAH"/>
<dbReference type="OrthoDB" id="5971574at2759"/>
<dbReference type="PAN-GO" id="Q93100">
    <property type="GO annotations" value="1 GO annotation based on evolutionary models"/>
</dbReference>
<dbReference type="PhylomeDB" id="Q93100"/>
<dbReference type="TreeFam" id="TF313970"/>
<dbReference type="BioCyc" id="MetaCyc:HS02424-MONOMER"/>
<dbReference type="BRENDA" id="2.7.11.19">
    <property type="organism ID" value="2681"/>
</dbReference>
<dbReference type="PathwayCommons" id="Q93100"/>
<dbReference type="Reactome" id="R-HSA-70221">
    <property type="pathway name" value="Glycogen breakdown (glycogenolysis)"/>
</dbReference>
<dbReference type="SignaLink" id="Q93100"/>
<dbReference type="UniPathway" id="UPA00163"/>
<dbReference type="BioGRID-ORCS" id="5257">
    <property type="hits" value="9 hits in 1153 CRISPR screens"/>
</dbReference>
<dbReference type="ChiTaRS" id="PHKB">
    <property type="organism name" value="human"/>
</dbReference>
<dbReference type="GeneWiki" id="PHKB"/>
<dbReference type="GenomeRNAi" id="5257"/>
<dbReference type="Pharos" id="Q93100">
    <property type="development level" value="Tbio"/>
</dbReference>
<dbReference type="PRO" id="PR:Q93100"/>
<dbReference type="Proteomes" id="UP000005640">
    <property type="component" value="Chromosome 16"/>
</dbReference>
<dbReference type="RNAct" id="Q93100">
    <property type="molecule type" value="protein"/>
</dbReference>
<dbReference type="Bgee" id="ENSG00000102893">
    <property type="expression patterns" value="Expressed in adrenal tissue and 212 other cell types or tissues"/>
</dbReference>
<dbReference type="ExpressionAtlas" id="Q93100">
    <property type="expression patterns" value="baseline and differential"/>
</dbReference>
<dbReference type="GO" id="GO:0005829">
    <property type="term" value="C:cytosol"/>
    <property type="evidence" value="ECO:0000304"/>
    <property type="project" value="Reactome"/>
</dbReference>
<dbReference type="GO" id="GO:0005964">
    <property type="term" value="C:phosphorylase kinase complex"/>
    <property type="evidence" value="ECO:0007669"/>
    <property type="project" value="Ensembl"/>
</dbReference>
<dbReference type="GO" id="GO:0005886">
    <property type="term" value="C:plasma membrane"/>
    <property type="evidence" value="ECO:0007669"/>
    <property type="project" value="UniProtKB-SubCell"/>
</dbReference>
<dbReference type="GO" id="GO:0005516">
    <property type="term" value="F:calmodulin binding"/>
    <property type="evidence" value="ECO:0007669"/>
    <property type="project" value="UniProtKB-KW"/>
</dbReference>
<dbReference type="GO" id="GO:0006091">
    <property type="term" value="P:generation of precursor metabolites and energy"/>
    <property type="evidence" value="ECO:0000304"/>
    <property type="project" value="ProtInc"/>
</dbReference>
<dbReference type="GO" id="GO:0005977">
    <property type="term" value="P:glycogen metabolic process"/>
    <property type="evidence" value="ECO:0000304"/>
    <property type="project" value="ProtInc"/>
</dbReference>
<dbReference type="InterPro" id="IPR008928">
    <property type="entry name" value="6-hairpin_glycosidase_sf"/>
</dbReference>
<dbReference type="InterPro" id="IPR011613">
    <property type="entry name" value="GH15-like"/>
</dbReference>
<dbReference type="InterPro" id="IPR045583">
    <property type="entry name" value="KPBA/B_C"/>
</dbReference>
<dbReference type="InterPro" id="IPR008734">
    <property type="entry name" value="PHK_A/B_su"/>
</dbReference>
<dbReference type="PANTHER" id="PTHR10749">
    <property type="entry name" value="PHOSPHORYLASE B KINASE REGULATORY SUBUNIT"/>
    <property type="match status" value="1"/>
</dbReference>
<dbReference type="PANTHER" id="PTHR10749:SF8">
    <property type="entry name" value="PHOSPHORYLASE B KINASE REGULATORY SUBUNIT BETA"/>
    <property type="match status" value="1"/>
</dbReference>
<dbReference type="Pfam" id="PF00723">
    <property type="entry name" value="Glyco_hydro_15"/>
    <property type="match status" value="1"/>
</dbReference>
<dbReference type="Pfam" id="PF19292">
    <property type="entry name" value="KPBB_C"/>
    <property type="match status" value="1"/>
</dbReference>
<dbReference type="SUPFAM" id="SSF48208">
    <property type="entry name" value="Six-hairpin glycosidases"/>
    <property type="match status" value="1"/>
</dbReference>
<accession>Q93100</accession>
<accession>Q8N4T5</accession>
<keyword id="KW-0002">3D-structure</keyword>
<keyword id="KW-0007">Acetylation</keyword>
<keyword id="KW-0025">Alternative splicing</keyword>
<keyword id="KW-0112">Calmodulin-binding</keyword>
<keyword id="KW-0119">Carbohydrate metabolism</keyword>
<keyword id="KW-1003">Cell membrane</keyword>
<keyword id="KW-0225">Disease variant</keyword>
<keyword id="KW-0321">Glycogen metabolism</keyword>
<keyword id="KW-0322">Glycogen storage disease</keyword>
<keyword id="KW-0449">Lipoprotein</keyword>
<keyword id="KW-0472">Membrane</keyword>
<keyword id="KW-0597">Phosphoprotein</keyword>
<keyword id="KW-0636">Prenylation</keyword>
<keyword id="KW-1267">Proteomics identification</keyword>
<keyword id="KW-1185">Reference proteome</keyword>
<proteinExistence type="evidence at protein level"/>
<gene>
    <name type="primary">PHKB</name>
</gene>
<evidence type="ECO:0000250" key="1"/>
<evidence type="ECO:0000250" key="2">
    <source>
        <dbReference type="UniProtKB" id="P12798"/>
    </source>
</evidence>
<evidence type="ECO:0000255" key="3"/>
<evidence type="ECO:0000256" key="4">
    <source>
        <dbReference type="SAM" id="MobiDB-lite"/>
    </source>
</evidence>
<evidence type="ECO:0000269" key="5">
    <source>
    </source>
</evidence>
<evidence type="ECO:0000269" key="6">
    <source>
    </source>
</evidence>
<evidence type="ECO:0000269" key="7">
    <source>
    </source>
</evidence>
<evidence type="ECO:0000269" key="8">
    <source>
    </source>
</evidence>
<evidence type="ECO:0000303" key="9">
    <source>
    </source>
</evidence>
<evidence type="ECO:0000305" key="10"/>
<evidence type="ECO:0007744" key="11">
    <source>
    </source>
</evidence>
<evidence type="ECO:0007744" key="12">
    <source>
    </source>
</evidence>
<evidence type="ECO:0007744" key="13">
    <source>
    </source>
</evidence>
<evidence type="ECO:0007744" key="14">
    <source>
    </source>
</evidence>
<evidence type="ECO:0007829" key="15">
    <source>
        <dbReference type="PDB" id="8JFK"/>
    </source>
</evidence>
<evidence type="ECO:0007829" key="16">
    <source>
        <dbReference type="PDB" id="8JFL"/>
    </source>
</evidence>
<evidence type="ECO:0007829" key="17">
    <source>
        <dbReference type="PDB" id="8XYA"/>
    </source>
</evidence>
<name>KPBB_HUMAN</name>